<accession>Q1CGW5</accession>
<accession>C4GVB8</accession>
<keyword id="KW-0028">Amino-acid biosynthesis</keyword>
<keyword id="KW-0963">Cytoplasm</keyword>
<keyword id="KW-0368">Histidine biosynthesis</keyword>
<keyword id="KW-0456">Lyase</keyword>
<feature type="chain" id="PRO_1000063176" description="Imidazole glycerol phosphate synthase subunit HisF">
    <location>
        <begin position="1"/>
        <end position="258"/>
    </location>
</feature>
<feature type="active site" evidence="1">
    <location>
        <position position="11"/>
    </location>
</feature>
<feature type="active site" evidence="1">
    <location>
        <position position="130"/>
    </location>
</feature>
<dbReference type="EC" id="4.3.2.10" evidence="1"/>
<dbReference type="EMBL" id="CP000305">
    <property type="protein sequence ID" value="ABG18765.1"/>
    <property type="molecule type" value="Genomic_DNA"/>
</dbReference>
<dbReference type="EMBL" id="ACNQ01000014">
    <property type="protein sequence ID" value="EEO76002.1"/>
    <property type="molecule type" value="Genomic_DNA"/>
</dbReference>
<dbReference type="RefSeq" id="WP_002211890.1">
    <property type="nucleotide sequence ID" value="NZ_ACNQ01000014.1"/>
</dbReference>
<dbReference type="SMR" id="Q1CGW5"/>
<dbReference type="GeneID" id="57977025"/>
<dbReference type="KEGG" id="ypn:YPN_2437"/>
<dbReference type="HOGENOM" id="CLU_048577_4_0_6"/>
<dbReference type="UniPathway" id="UPA00031">
    <property type="reaction ID" value="UER00010"/>
</dbReference>
<dbReference type="Proteomes" id="UP000008936">
    <property type="component" value="Chromosome"/>
</dbReference>
<dbReference type="GO" id="GO:0005737">
    <property type="term" value="C:cytoplasm"/>
    <property type="evidence" value="ECO:0007669"/>
    <property type="project" value="UniProtKB-SubCell"/>
</dbReference>
<dbReference type="GO" id="GO:0000107">
    <property type="term" value="F:imidazoleglycerol-phosphate synthase activity"/>
    <property type="evidence" value="ECO:0007669"/>
    <property type="project" value="UniProtKB-UniRule"/>
</dbReference>
<dbReference type="GO" id="GO:0016829">
    <property type="term" value="F:lyase activity"/>
    <property type="evidence" value="ECO:0007669"/>
    <property type="project" value="UniProtKB-KW"/>
</dbReference>
<dbReference type="GO" id="GO:0000105">
    <property type="term" value="P:L-histidine biosynthetic process"/>
    <property type="evidence" value="ECO:0007669"/>
    <property type="project" value="UniProtKB-UniRule"/>
</dbReference>
<dbReference type="CDD" id="cd04731">
    <property type="entry name" value="HisF"/>
    <property type="match status" value="1"/>
</dbReference>
<dbReference type="FunFam" id="3.20.20.70:FF:000006">
    <property type="entry name" value="Imidazole glycerol phosphate synthase subunit HisF"/>
    <property type="match status" value="1"/>
</dbReference>
<dbReference type="Gene3D" id="3.20.20.70">
    <property type="entry name" value="Aldolase class I"/>
    <property type="match status" value="1"/>
</dbReference>
<dbReference type="HAMAP" id="MF_01013">
    <property type="entry name" value="HisF"/>
    <property type="match status" value="1"/>
</dbReference>
<dbReference type="InterPro" id="IPR013785">
    <property type="entry name" value="Aldolase_TIM"/>
</dbReference>
<dbReference type="InterPro" id="IPR006062">
    <property type="entry name" value="His_biosynth"/>
</dbReference>
<dbReference type="InterPro" id="IPR004651">
    <property type="entry name" value="HisF"/>
</dbReference>
<dbReference type="InterPro" id="IPR050064">
    <property type="entry name" value="IGPS_HisA/HisF"/>
</dbReference>
<dbReference type="InterPro" id="IPR011060">
    <property type="entry name" value="RibuloseP-bd_barrel"/>
</dbReference>
<dbReference type="NCBIfam" id="TIGR00735">
    <property type="entry name" value="hisF"/>
    <property type="match status" value="1"/>
</dbReference>
<dbReference type="PANTHER" id="PTHR21235:SF2">
    <property type="entry name" value="IMIDAZOLE GLYCEROL PHOSPHATE SYNTHASE HISHF"/>
    <property type="match status" value="1"/>
</dbReference>
<dbReference type="PANTHER" id="PTHR21235">
    <property type="entry name" value="IMIDAZOLE GLYCEROL PHOSPHATE SYNTHASE SUBUNIT HISF/H IGP SYNTHASE SUBUNIT HISF/H"/>
    <property type="match status" value="1"/>
</dbReference>
<dbReference type="Pfam" id="PF00977">
    <property type="entry name" value="His_biosynth"/>
    <property type="match status" value="1"/>
</dbReference>
<dbReference type="SUPFAM" id="SSF51366">
    <property type="entry name" value="Ribulose-phoshate binding barrel"/>
    <property type="match status" value="1"/>
</dbReference>
<organism>
    <name type="scientific">Yersinia pestis bv. Antiqua (strain Nepal516)</name>
    <dbReference type="NCBI Taxonomy" id="377628"/>
    <lineage>
        <taxon>Bacteria</taxon>
        <taxon>Pseudomonadati</taxon>
        <taxon>Pseudomonadota</taxon>
        <taxon>Gammaproteobacteria</taxon>
        <taxon>Enterobacterales</taxon>
        <taxon>Yersiniaceae</taxon>
        <taxon>Yersinia</taxon>
    </lineage>
</organism>
<name>HIS6_YERPN</name>
<protein>
    <recommendedName>
        <fullName evidence="1">Imidazole glycerol phosphate synthase subunit HisF</fullName>
        <ecNumber evidence="1">4.3.2.10</ecNumber>
    </recommendedName>
    <alternativeName>
        <fullName evidence="1">IGP synthase cyclase subunit</fullName>
    </alternativeName>
    <alternativeName>
        <fullName evidence="1">IGP synthase subunit HisF</fullName>
    </alternativeName>
    <alternativeName>
        <fullName evidence="1">ImGP synthase subunit HisF</fullName>
        <shortName evidence="1">IGPS subunit HisF</shortName>
    </alternativeName>
</protein>
<sequence length="258" mass="28510">MLAKRIIPCLDVKDGQVVKGVQFRNHEIIGDIVPLAQRYAQEGADELVFYDITASSDGRVVDKSWVARVAEVIDIPFCVAGGIKSVEDASQILTFGADKISINSPALADPTLITRLADRYGVQCIVVGIDTWYDTESDSYQVYQFTGDEKRTKATTWQTEDWVKEVQLRGAGEIVLNMMNQDGVRNGYDLRQLQQMRAICHVPLIASGGAGTPDHFLEAFRDADVDGALAASVFHKQIINIGELKKYLSEQGVEIRVC</sequence>
<proteinExistence type="inferred from homology"/>
<reference key="1">
    <citation type="journal article" date="2006" name="J. Bacteriol.">
        <title>Complete genome sequence of Yersinia pestis strains Antiqua and Nepal516: evidence of gene reduction in an emerging pathogen.</title>
        <authorList>
            <person name="Chain P.S.G."/>
            <person name="Hu P."/>
            <person name="Malfatti S.A."/>
            <person name="Radnedge L."/>
            <person name="Larimer F."/>
            <person name="Vergez L.M."/>
            <person name="Worsham P."/>
            <person name="Chu M.C."/>
            <person name="Andersen G.L."/>
        </authorList>
    </citation>
    <scope>NUCLEOTIDE SEQUENCE [LARGE SCALE GENOMIC DNA]</scope>
    <source>
        <strain>Nepal516</strain>
    </source>
</reference>
<reference key="2">
    <citation type="submission" date="2009-04" db="EMBL/GenBank/DDBJ databases">
        <title>Yersinia pestis Nepal516A whole genome shotgun sequencing project.</title>
        <authorList>
            <person name="Plunkett G. III"/>
            <person name="Anderson B.D."/>
            <person name="Baumler D.J."/>
            <person name="Burland V."/>
            <person name="Cabot E.L."/>
            <person name="Glasner J.D."/>
            <person name="Mau B."/>
            <person name="Neeno-Eckwall E."/>
            <person name="Perna N.T."/>
            <person name="Munk A.C."/>
            <person name="Tapia R."/>
            <person name="Green L.D."/>
            <person name="Rogers Y.C."/>
            <person name="Detter J.C."/>
            <person name="Bruce D.C."/>
            <person name="Brettin T.S."/>
        </authorList>
    </citation>
    <scope>NUCLEOTIDE SEQUENCE [LARGE SCALE GENOMIC DNA]</scope>
    <source>
        <strain>Nepal516</strain>
    </source>
</reference>
<evidence type="ECO:0000255" key="1">
    <source>
        <dbReference type="HAMAP-Rule" id="MF_01013"/>
    </source>
</evidence>
<gene>
    <name evidence="1" type="primary">hisF</name>
    <name type="ordered locus">YPN_2437</name>
    <name type="ORF">YP516_2747</name>
</gene>
<comment type="function">
    <text evidence="1">IGPS catalyzes the conversion of PRFAR and glutamine to IGP, AICAR and glutamate. The HisF subunit catalyzes the cyclization activity that produces IGP and AICAR from PRFAR using the ammonia provided by the HisH subunit.</text>
</comment>
<comment type="catalytic activity">
    <reaction evidence="1">
        <text>5-[(5-phospho-1-deoxy-D-ribulos-1-ylimino)methylamino]-1-(5-phospho-beta-D-ribosyl)imidazole-4-carboxamide + L-glutamine = D-erythro-1-(imidazol-4-yl)glycerol 3-phosphate + 5-amino-1-(5-phospho-beta-D-ribosyl)imidazole-4-carboxamide + L-glutamate + H(+)</text>
        <dbReference type="Rhea" id="RHEA:24793"/>
        <dbReference type="ChEBI" id="CHEBI:15378"/>
        <dbReference type="ChEBI" id="CHEBI:29985"/>
        <dbReference type="ChEBI" id="CHEBI:58278"/>
        <dbReference type="ChEBI" id="CHEBI:58359"/>
        <dbReference type="ChEBI" id="CHEBI:58475"/>
        <dbReference type="ChEBI" id="CHEBI:58525"/>
        <dbReference type="EC" id="4.3.2.10"/>
    </reaction>
</comment>
<comment type="pathway">
    <text evidence="1">Amino-acid biosynthesis; L-histidine biosynthesis; L-histidine from 5-phospho-alpha-D-ribose 1-diphosphate: step 5/9.</text>
</comment>
<comment type="subunit">
    <text evidence="1">Heterodimer of HisH and HisF.</text>
</comment>
<comment type="subcellular location">
    <subcellularLocation>
        <location evidence="1">Cytoplasm</location>
    </subcellularLocation>
</comment>
<comment type="similarity">
    <text evidence="1">Belongs to the HisA/HisF family.</text>
</comment>